<sequence>MESGGLGCAVCVLTGASRGFGRALAPRLAQLLAPGSVLLLCARSDSALRRLEEELGAQQPGLRVVRAAADLGTEAGLRQVLRAVRELPKPEGLQRLLLINNAGTLGDVSKGVLNVNDPAEVNNYWALNLTSMLCLTSGTLNAFPDSPGLSKTVVNISSLCALQPFKGWGLYCTGKAARDMLCQVLAAEEPSVRVLSYAPGPLDTDMQQLARETSMDPELRNRLQRLKSEGELVDCGTSAQKLLNLLQKDTFQSGAHVDFYDN</sequence>
<accession>Q8R536</accession>
<keyword id="KW-0007">Acetylation</keyword>
<keyword id="KW-0963">Cytoplasm</keyword>
<keyword id="KW-0521">NADP</keyword>
<keyword id="KW-0560">Oxidoreductase</keyword>
<keyword id="KW-0597">Phosphoprotein</keyword>
<comment type="function">
    <text>Catalyzes the final one or two reductions in tetra-hydrobiopterin biosynthesis to form 5,6,7,8-tetrahydrobiopterin. The enzyme also catalyzes the reduction of benzil to (S)-benzoin.</text>
</comment>
<comment type="catalytic activity">
    <reaction>
        <text>L-erythro-7,8-dihydrobiopterin + NADP(+) = L-sepiapterin + NADPH + H(+)</text>
        <dbReference type="Rhea" id="RHEA:18953"/>
        <dbReference type="ChEBI" id="CHEBI:15378"/>
        <dbReference type="ChEBI" id="CHEBI:43029"/>
        <dbReference type="ChEBI" id="CHEBI:57783"/>
        <dbReference type="ChEBI" id="CHEBI:58349"/>
        <dbReference type="ChEBI" id="CHEBI:194527"/>
        <dbReference type="EC" id="1.1.1.153"/>
    </reaction>
</comment>
<comment type="catalytic activity">
    <reaction>
        <text>(6R)-L-erythro-5,6,7,8-tetrahydrobiopterin + 2 NADP(+) = 6-pyruvoyl-5,6,7,8-tetrahydropterin + 2 NADPH + 2 H(+)</text>
        <dbReference type="Rhea" id="RHEA:32627"/>
        <dbReference type="ChEBI" id="CHEBI:15378"/>
        <dbReference type="ChEBI" id="CHEBI:57783"/>
        <dbReference type="ChEBI" id="CHEBI:58349"/>
        <dbReference type="ChEBI" id="CHEBI:59560"/>
        <dbReference type="ChEBI" id="CHEBI:136564"/>
        <dbReference type="EC" id="1.1.1.153"/>
    </reaction>
</comment>
<comment type="catalytic activity">
    <reaction>
        <text>(S)-benzoin + NADP(+) = benzil + NADPH + H(+)</text>
        <dbReference type="Rhea" id="RHEA:25968"/>
        <dbReference type="ChEBI" id="CHEBI:15378"/>
        <dbReference type="ChEBI" id="CHEBI:51507"/>
        <dbReference type="ChEBI" id="CHEBI:51510"/>
        <dbReference type="ChEBI" id="CHEBI:57783"/>
        <dbReference type="ChEBI" id="CHEBI:58349"/>
        <dbReference type="EC" id="1.1.1.320"/>
    </reaction>
</comment>
<comment type="subunit">
    <text evidence="1">Homodimer.</text>
</comment>
<comment type="subcellular location">
    <subcellularLocation>
        <location evidence="1">Cytoplasm</location>
    </subcellularLocation>
</comment>
<comment type="similarity">
    <text evidence="4">Belongs to the sepiapterin reductase family.</text>
</comment>
<name>SPRE_MERUN</name>
<reference key="1">
    <citation type="journal article" date="2002" name="J. Biotechnol.">
        <title>The enzymes with benzil reductase activity conserved from bacteria to mammals.</title>
        <authorList>
            <person name="Maruyama R."/>
            <person name="Nishizawa M."/>
            <person name="Itoi Y."/>
            <person name="Ito S."/>
            <person name="Inoue M."/>
        </authorList>
    </citation>
    <scope>NUCLEOTIDE SEQUENCE [MRNA]</scope>
    <source>
        <strain>MGS/Sea</strain>
        <tissue>Liver</tissue>
    </source>
</reference>
<organism>
    <name type="scientific">Meriones unguiculatus</name>
    <name type="common">Mongolian jird</name>
    <name type="synonym">Gerbillus unguiculatus</name>
    <dbReference type="NCBI Taxonomy" id="10047"/>
    <lineage>
        <taxon>Eukaryota</taxon>
        <taxon>Metazoa</taxon>
        <taxon>Chordata</taxon>
        <taxon>Craniata</taxon>
        <taxon>Vertebrata</taxon>
        <taxon>Euteleostomi</taxon>
        <taxon>Mammalia</taxon>
        <taxon>Eutheria</taxon>
        <taxon>Euarchontoglires</taxon>
        <taxon>Glires</taxon>
        <taxon>Rodentia</taxon>
        <taxon>Myomorpha</taxon>
        <taxon>Muroidea</taxon>
        <taxon>Muridae</taxon>
        <taxon>Gerbillinae</taxon>
        <taxon>Meriones</taxon>
    </lineage>
</organism>
<proteinExistence type="evidence at transcript level"/>
<dbReference type="EC" id="1.1.1.153"/>
<dbReference type="EC" id="1.1.1.320"/>
<dbReference type="EMBL" id="AB048357">
    <property type="protein sequence ID" value="BAB86000.1"/>
    <property type="molecule type" value="mRNA"/>
</dbReference>
<dbReference type="SMR" id="Q8R536"/>
<dbReference type="GO" id="GO:0005737">
    <property type="term" value="C:cytoplasm"/>
    <property type="evidence" value="ECO:0007669"/>
    <property type="project" value="UniProtKB-SubCell"/>
</dbReference>
<dbReference type="GO" id="GO:0102306">
    <property type="term" value="F:benzil reductase [(S)-benzoin-forming] activity"/>
    <property type="evidence" value="ECO:0007669"/>
    <property type="project" value="UniProtKB-EC"/>
</dbReference>
<dbReference type="GO" id="GO:0004757">
    <property type="term" value="F:sepiapterin reductase (NADP+) activity"/>
    <property type="evidence" value="ECO:0000250"/>
    <property type="project" value="UniProtKB"/>
</dbReference>
<dbReference type="GO" id="GO:0006729">
    <property type="term" value="P:tetrahydrobiopterin biosynthetic process"/>
    <property type="evidence" value="ECO:0007669"/>
    <property type="project" value="InterPro"/>
</dbReference>
<dbReference type="CDD" id="cd05367">
    <property type="entry name" value="SPR-like_SDR_c"/>
    <property type="match status" value="1"/>
</dbReference>
<dbReference type="FunFam" id="3.40.50.720:FF:000259">
    <property type="entry name" value="Sepiapterin reductase"/>
    <property type="match status" value="1"/>
</dbReference>
<dbReference type="Gene3D" id="3.40.50.720">
    <property type="entry name" value="NAD(P)-binding Rossmann-like Domain"/>
    <property type="match status" value="1"/>
</dbReference>
<dbReference type="InterPro" id="IPR051721">
    <property type="entry name" value="Biopterin_syn/organic_redct"/>
</dbReference>
<dbReference type="InterPro" id="IPR036291">
    <property type="entry name" value="NAD(P)-bd_dom_sf"/>
</dbReference>
<dbReference type="InterPro" id="IPR002347">
    <property type="entry name" value="SDR_fam"/>
</dbReference>
<dbReference type="InterPro" id="IPR006393">
    <property type="entry name" value="Sepiapterin_red"/>
</dbReference>
<dbReference type="NCBIfam" id="TIGR01500">
    <property type="entry name" value="sepiapter_red"/>
    <property type="match status" value="1"/>
</dbReference>
<dbReference type="PANTHER" id="PTHR44085">
    <property type="entry name" value="SEPIAPTERIN REDUCTASE"/>
    <property type="match status" value="1"/>
</dbReference>
<dbReference type="PANTHER" id="PTHR44085:SF2">
    <property type="entry name" value="SEPIAPTERIN REDUCTASE"/>
    <property type="match status" value="1"/>
</dbReference>
<dbReference type="Pfam" id="PF00106">
    <property type="entry name" value="adh_short"/>
    <property type="match status" value="1"/>
</dbReference>
<dbReference type="PRINTS" id="PR00081">
    <property type="entry name" value="GDHRDH"/>
</dbReference>
<dbReference type="SUPFAM" id="SSF51735">
    <property type="entry name" value="NAD(P)-binding Rossmann-fold domains"/>
    <property type="match status" value="1"/>
</dbReference>
<evidence type="ECO:0000250" key="1"/>
<evidence type="ECO:0000250" key="2">
    <source>
        <dbReference type="UniProtKB" id="P18297"/>
    </source>
</evidence>
<evidence type="ECO:0000250" key="3">
    <source>
        <dbReference type="UniProtKB" id="P35270"/>
    </source>
</evidence>
<evidence type="ECO:0000305" key="4"/>
<gene>
    <name type="primary">SPR</name>
</gene>
<protein>
    <recommendedName>
        <fullName>Sepiapterin reductase</fullName>
        <shortName>SPR</shortName>
        <ecNumber>1.1.1.153</ecNumber>
    </recommendedName>
    <alternativeName>
        <fullName>Benzil reductase ((S)-benzoin forming)</fullName>
        <ecNumber>1.1.1.320</ecNumber>
    </alternativeName>
</protein>
<feature type="chain" id="PRO_0000327642" description="Sepiapterin reductase">
    <location>
        <begin position="1"/>
        <end position="262"/>
    </location>
</feature>
<feature type="binding site" evidence="1">
    <location>
        <begin position="15"/>
        <end position="21"/>
    </location>
    <ligand>
        <name>NADP(+)</name>
        <dbReference type="ChEBI" id="CHEBI:58349"/>
    </ligand>
</feature>
<feature type="binding site" evidence="1">
    <location>
        <begin position="43"/>
        <end position="44"/>
    </location>
    <ligand>
        <name>NADP(+)</name>
        <dbReference type="ChEBI" id="CHEBI:58349"/>
    </ligand>
</feature>
<feature type="binding site" evidence="1">
    <location>
        <begin position="70"/>
        <end position="71"/>
    </location>
    <ligand>
        <name>NADP(+)</name>
        <dbReference type="ChEBI" id="CHEBI:58349"/>
    </ligand>
</feature>
<feature type="binding site" evidence="1">
    <location>
        <begin position="158"/>
        <end position="159"/>
    </location>
    <ligand>
        <name>substrate</name>
    </ligand>
</feature>
<feature type="binding site" evidence="1">
    <location>
        <position position="171"/>
    </location>
    <ligand>
        <name>substrate</name>
    </ligand>
</feature>
<feature type="binding site" evidence="1">
    <location>
        <position position="175"/>
    </location>
    <ligand>
        <name>NADP(+)</name>
        <dbReference type="ChEBI" id="CHEBI:58349"/>
    </ligand>
</feature>
<feature type="binding site" evidence="1">
    <location>
        <position position="200"/>
    </location>
    <ligand>
        <name>substrate</name>
    </ligand>
</feature>
<feature type="binding site" evidence="1">
    <location>
        <begin position="202"/>
        <end position="207"/>
    </location>
    <ligand>
        <name>NADP(+)</name>
        <dbReference type="ChEBI" id="CHEBI:58349"/>
    </ligand>
</feature>
<feature type="binding site" evidence="1">
    <location>
        <position position="258"/>
    </location>
    <ligand>
        <name>substrate</name>
    </ligand>
</feature>
<feature type="modified residue" description="N-acetylmethionine" evidence="2">
    <location>
        <position position="1"/>
    </location>
</feature>
<feature type="modified residue" description="Phosphoserine" evidence="2">
    <location>
        <position position="46"/>
    </location>
</feature>
<feature type="modified residue" description="Phosphoserine" evidence="2">
    <location>
        <position position="196"/>
    </location>
</feature>
<feature type="modified residue" description="Phosphoserine" evidence="3">
    <location>
        <position position="214"/>
    </location>
</feature>